<sequence>APQPYAFGL</sequence>
<proteinExistence type="evidence at protein level"/>
<organism>
    <name type="scientific">Carcinus maenas</name>
    <name type="common">Common shore crab</name>
    <name type="synonym">Green crab</name>
    <dbReference type="NCBI Taxonomy" id="6759"/>
    <lineage>
        <taxon>Eukaryota</taxon>
        <taxon>Metazoa</taxon>
        <taxon>Ecdysozoa</taxon>
        <taxon>Arthropoda</taxon>
        <taxon>Crustacea</taxon>
        <taxon>Multicrustacea</taxon>
        <taxon>Malacostraca</taxon>
        <taxon>Eumalacostraca</taxon>
        <taxon>Eucarida</taxon>
        <taxon>Decapoda</taxon>
        <taxon>Pleocyemata</taxon>
        <taxon>Brachyura</taxon>
        <taxon>Eubrachyura</taxon>
        <taxon>Portunoidea</taxon>
        <taxon>Carcinidae</taxon>
        <taxon>Carcinus</taxon>
    </lineage>
</organism>
<protein>
    <recommendedName>
        <fullName>Carcinustatin-10</fullName>
    </recommendedName>
</protein>
<name>ALL10_CARMA</name>
<keyword id="KW-0027">Amidation</keyword>
<keyword id="KW-0903">Direct protein sequencing</keyword>
<keyword id="KW-0527">Neuropeptide</keyword>
<keyword id="KW-0964">Secreted</keyword>
<accession>P81813</accession>
<reference key="1">
    <citation type="journal article" date="1997" name="Eur. J. Biochem.">
        <title>Isolation and identification of multiple neuropeptides of the allatostatin superfamily in the shore crab Carcinus maenas.</title>
        <authorList>
            <person name="Duve H."/>
            <person name="Johnsen A.H."/>
            <person name="Maestro J.-L."/>
            <person name="Scott A.G."/>
            <person name="Jaros P.P."/>
            <person name="Thorpe A."/>
        </authorList>
    </citation>
    <scope>PROTEIN SEQUENCE</scope>
    <scope>AMIDATION AT LEU-9</scope>
    <source>
        <tissue>Cerebral ganglion</tissue>
        <tissue>Thoracic ganglion</tissue>
    </source>
</reference>
<feature type="peptide" id="PRO_0000043465" description="Carcinustatin-10">
    <location>
        <begin position="1"/>
        <end position="9"/>
    </location>
</feature>
<feature type="modified residue" description="Leucine amide" evidence="1">
    <location>
        <position position="9"/>
    </location>
</feature>
<comment type="function">
    <text>May act as a neurotransmitter or neuromodulator.</text>
</comment>
<comment type="subcellular location">
    <subcellularLocation>
        <location>Secreted</location>
    </subcellularLocation>
</comment>
<comment type="similarity">
    <text evidence="2">Belongs to the allatostatin family.</text>
</comment>
<dbReference type="GO" id="GO:0005576">
    <property type="term" value="C:extracellular region"/>
    <property type="evidence" value="ECO:0007669"/>
    <property type="project" value="UniProtKB-SubCell"/>
</dbReference>
<dbReference type="GO" id="GO:0007218">
    <property type="term" value="P:neuropeptide signaling pathway"/>
    <property type="evidence" value="ECO:0007669"/>
    <property type="project" value="UniProtKB-KW"/>
</dbReference>
<evidence type="ECO:0000269" key="1">
    <source>
    </source>
</evidence>
<evidence type="ECO:0000305" key="2"/>